<dbReference type="EC" id="2.7.7.6" evidence="1"/>
<dbReference type="EMBL" id="CP000627">
    <property type="protein sequence ID" value="ABQ19884.1"/>
    <property type="molecule type" value="Genomic_DNA"/>
</dbReference>
<dbReference type="EMBL" id="CP001235">
    <property type="protein sequence ID" value="ACP10805.1"/>
    <property type="molecule type" value="Genomic_DNA"/>
</dbReference>
<dbReference type="RefSeq" id="WP_000135052.1">
    <property type="nucleotide sequence ID" value="NZ_JAACZH010000007.1"/>
</dbReference>
<dbReference type="SMR" id="A5F4S8"/>
<dbReference type="GeneID" id="94012648"/>
<dbReference type="KEGG" id="vco:VC0395_A2281"/>
<dbReference type="KEGG" id="vcr:VC395_2821"/>
<dbReference type="PATRIC" id="fig|345073.21.peg.2719"/>
<dbReference type="eggNOG" id="COG1758">
    <property type="taxonomic scope" value="Bacteria"/>
</dbReference>
<dbReference type="HOGENOM" id="CLU_125406_5_3_6"/>
<dbReference type="OrthoDB" id="9796300at2"/>
<dbReference type="Proteomes" id="UP000000249">
    <property type="component" value="Chromosome 2"/>
</dbReference>
<dbReference type="GO" id="GO:0000428">
    <property type="term" value="C:DNA-directed RNA polymerase complex"/>
    <property type="evidence" value="ECO:0007669"/>
    <property type="project" value="UniProtKB-KW"/>
</dbReference>
<dbReference type="GO" id="GO:0003677">
    <property type="term" value="F:DNA binding"/>
    <property type="evidence" value="ECO:0007669"/>
    <property type="project" value="UniProtKB-UniRule"/>
</dbReference>
<dbReference type="GO" id="GO:0003899">
    <property type="term" value="F:DNA-directed RNA polymerase activity"/>
    <property type="evidence" value="ECO:0007669"/>
    <property type="project" value="UniProtKB-UniRule"/>
</dbReference>
<dbReference type="GO" id="GO:0006351">
    <property type="term" value="P:DNA-templated transcription"/>
    <property type="evidence" value="ECO:0007669"/>
    <property type="project" value="UniProtKB-UniRule"/>
</dbReference>
<dbReference type="FunFam" id="3.90.940.10:FF:000001">
    <property type="entry name" value="DNA-directed RNA polymerase subunit omega"/>
    <property type="match status" value="1"/>
</dbReference>
<dbReference type="Gene3D" id="3.90.940.10">
    <property type="match status" value="1"/>
</dbReference>
<dbReference type="HAMAP" id="MF_00366">
    <property type="entry name" value="RNApol_bact_RpoZ"/>
    <property type="match status" value="1"/>
</dbReference>
<dbReference type="InterPro" id="IPR003716">
    <property type="entry name" value="DNA-dir_RNA_pol_omega"/>
</dbReference>
<dbReference type="InterPro" id="IPR006110">
    <property type="entry name" value="Pol_omega/Rpo6/RPB6"/>
</dbReference>
<dbReference type="InterPro" id="IPR036161">
    <property type="entry name" value="RPB6/omega-like_sf"/>
</dbReference>
<dbReference type="NCBIfam" id="TIGR00690">
    <property type="entry name" value="rpoZ"/>
    <property type="match status" value="1"/>
</dbReference>
<dbReference type="PANTHER" id="PTHR34476">
    <property type="entry name" value="DNA-DIRECTED RNA POLYMERASE SUBUNIT OMEGA"/>
    <property type="match status" value="1"/>
</dbReference>
<dbReference type="PANTHER" id="PTHR34476:SF1">
    <property type="entry name" value="DNA-DIRECTED RNA POLYMERASE SUBUNIT OMEGA"/>
    <property type="match status" value="1"/>
</dbReference>
<dbReference type="Pfam" id="PF01192">
    <property type="entry name" value="RNA_pol_Rpb6"/>
    <property type="match status" value="1"/>
</dbReference>
<dbReference type="SMART" id="SM01409">
    <property type="entry name" value="RNA_pol_Rpb6"/>
    <property type="match status" value="1"/>
</dbReference>
<dbReference type="SUPFAM" id="SSF63562">
    <property type="entry name" value="RPB6/omega subunit-like"/>
    <property type="match status" value="1"/>
</dbReference>
<evidence type="ECO:0000255" key="1">
    <source>
        <dbReference type="HAMAP-Rule" id="MF_00366"/>
    </source>
</evidence>
<evidence type="ECO:0000256" key="2">
    <source>
        <dbReference type="SAM" id="MobiDB-lite"/>
    </source>
</evidence>
<organism>
    <name type="scientific">Vibrio cholerae serotype O1 (strain ATCC 39541 / Classical Ogawa 395 / O395)</name>
    <dbReference type="NCBI Taxonomy" id="345073"/>
    <lineage>
        <taxon>Bacteria</taxon>
        <taxon>Pseudomonadati</taxon>
        <taxon>Pseudomonadota</taxon>
        <taxon>Gammaproteobacteria</taxon>
        <taxon>Vibrionales</taxon>
        <taxon>Vibrionaceae</taxon>
        <taxon>Vibrio</taxon>
    </lineage>
</organism>
<feature type="chain" id="PRO_1000072108" description="DNA-directed RNA polymerase subunit omega">
    <location>
        <begin position="1"/>
        <end position="90"/>
    </location>
</feature>
<feature type="region of interest" description="Disordered" evidence="2">
    <location>
        <begin position="70"/>
        <end position="90"/>
    </location>
</feature>
<protein>
    <recommendedName>
        <fullName evidence="1">DNA-directed RNA polymerase subunit omega</fullName>
        <shortName evidence="1">RNAP omega subunit</shortName>
        <ecNumber evidence="1">2.7.7.6</ecNumber>
    </recommendedName>
    <alternativeName>
        <fullName evidence="1">RNA polymerase omega subunit</fullName>
    </alternativeName>
    <alternativeName>
        <fullName evidence="1">Transcriptase subunit omega</fullName>
    </alternativeName>
</protein>
<comment type="function">
    <text evidence="1">Promotes RNA polymerase assembly. Latches the N- and C-terminal regions of the beta' subunit thereby facilitating its interaction with the beta and alpha subunits.</text>
</comment>
<comment type="catalytic activity">
    <reaction evidence="1">
        <text>RNA(n) + a ribonucleoside 5'-triphosphate = RNA(n+1) + diphosphate</text>
        <dbReference type="Rhea" id="RHEA:21248"/>
        <dbReference type="Rhea" id="RHEA-COMP:14527"/>
        <dbReference type="Rhea" id="RHEA-COMP:17342"/>
        <dbReference type="ChEBI" id="CHEBI:33019"/>
        <dbReference type="ChEBI" id="CHEBI:61557"/>
        <dbReference type="ChEBI" id="CHEBI:140395"/>
        <dbReference type="EC" id="2.7.7.6"/>
    </reaction>
</comment>
<comment type="subunit">
    <text evidence="1">The RNAP catalytic core consists of 2 alpha, 1 beta, 1 beta' and 1 omega subunit. When a sigma factor is associated with the core the holoenzyme is formed, which can initiate transcription.</text>
</comment>
<comment type="similarity">
    <text evidence="1">Belongs to the RNA polymerase subunit omega family.</text>
</comment>
<name>RPOZ_VIBC3</name>
<accession>A5F4S8</accession>
<accession>C3LY84</accession>
<reference key="1">
    <citation type="submission" date="2007-03" db="EMBL/GenBank/DDBJ databases">
        <authorList>
            <person name="Heidelberg J."/>
        </authorList>
    </citation>
    <scope>NUCLEOTIDE SEQUENCE [LARGE SCALE GENOMIC DNA]</scope>
    <source>
        <strain>ATCC 39541 / Classical Ogawa 395 / O395</strain>
    </source>
</reference>
<reference key="2">
    <citation type="journal article" date="2008" name="PLoS ONE">
        <title>A recalibrated molecular clock and independent origins for the cholera pandemic clones.</title>
        <authorList>
            <person name="Feng L."/>
            <person name="Reeves P.R."/>
            <person name="Lan R."/>
            <person name="Ren Y."/>
            <person name="Gao C."/>
            <person name="Zhou Z."/>
            <person name="Ren Y."/>
            <person name="Cheng J."/>
            <person name="Wang W."/>
            <person name="Wang J."/>
            <person name="Qian W."/>
            <person name="Li D."/>
            <person name="Wang L."/>
        </authorList>
    </citation>
    <scope>NUCLEOTIDE SEQUENCE [LARGE SCALE GENOMIC DNA]</scope>
    <source>
        <strain>ATCC 39541 / Classical Ogawa 395 / O395</strain>
    </source>
</reference>
<proteinExistence type="inferred from homology"/>
<sequence>MARVTVQDAVEKIGNRFDLVLVAARRARQMQSGGKDALVPEENDKPTVIALREIEEGLITKDVLDARERQEQQEQEAAELAAVSSIMHNR</sequence>
<gene>
    <name evidence="1" type="primary">rpoZ</name>
    <name type="ordered locus">VC0395_A2281</name>
    <name type="ordered locus">VC395_2821</name>
</gene>
<keyword id="KW-0240">DNA-directed RNA polymerase</keyword>
<keyword id="KW-0548">Nucleotidyltransferase</keyword>
<keyword id="KW-0804">Transcription</keyword>
<keyword id="KW-0808">Transferase</keyword>